<accession>C3N5Q9</accession>
<dbReference type="EC" id="3.1.26.5" evidence="1"/>
<dbReference type="EMBL" id="CP001401">
    <property type="protein sequence ID" value="ACP55334.1"/>
    <property type="molecule type" value="Genomic_DNA"/>
</dbReference>
<dbReference type="RefSeq" id="WP_012711400.1">
    <property type="nucleotide sequence ID" value="NC_012632.1"/>
</dbReference>
<dbReference type="SMR" id="C3N5Q9"/>
<dbReference type="KEGG" id="sim:M1627_1452"/>
<dbReference type="HOGENOM" id="CLU_1801579_0_0_2"/>
<dbReference type="Proteomes" id="UP000002307">
    <property type="component" value="Chromosome"/>
</dbReference>
<dbReference type="GO" id="GO:0005737">
    <property type="term" value="C:cytoplasm"/>
    <property type="evidence" value="ECO:0007669"/>
    <property type="project" value="UniProtKB-SubCell"/>
</dbReference>
<dbReference type="GO" id="GO:0030677">
    <property type="term" value="C:ribonuclease P complex"/>
    <property type="evidence" value="ECO:0007669"/>
    <property type="project" value="UniProtKB-UniRule"/>
</dbReference>
<dbReference type="GO" id="GO:0004526">
    <property type="term" value="F:ribonuclease P activity"/>
    <property type="evidence" value="ECO:0007669"/>
    <property type="project" value="UniProtKB-UniRule"/>
</dbReference>
<dbReference type="GO" id="GO:0001682">
    <property type="term" value="P:tRNA 5'-leader removal"/>
    <property type="evidence" value="ECO:0007669"/>
    <property type="project" value="UniProtKB-UniRule"/>
</dbReference>
<dbReference type="Gene3D" id="3.30.70.3250">
    <property type="entry name" value="Ribonuclease P, Pop5 subunit"/>
    <property type="match status" value="1"/>
</dbReference>
<dbReference type="HAMAP" id="MF_00755">
    <property type="entry name" value="RNase_P_2"/>
    <property type="match status" value="1"/>
</dbReference>
<dbReference type="InterPro" id="IPR002759">
    <property type="entry name" value="Pop5/Rpp14/Rnp2-like"/>
</dbReference>
<dbReference type="InterPro" id="IPR038085">
    <property type="entry name" value="Rnp2-like_sf"/>
</dbReference>
<dbReference type="Pfam" id="PF01900">
    <property type="entry name" value="RNase_P_Rpp14"/>
    <property type="match status" value="1"/>
</dbReference>
<dbReference type="SUPFAM" id="SSF160350">
    <property type="entry name" value="Rnp2-like"/>
    <property type="match status" value="1"/>
</dbReference>
<protein>
    <recommendedName>
        <fullName evidence="1">Ribonuclease P protein component 2</fullName>
        <shortName evidence="1">RNase P component 2</shortName>
        <ecNumber evidence="1">3.1.26.5</ecNumber>
    </recommendedName>
    <alternativeName>
        <fullName evidence="1">Pop5</fullName>
    </alternativeName>
</protein>
<keyword id="KW-0963">Cytoplasm</keyword>
<keyword id="KW-0255">Endonuclease</keyword>
<keyword id="KW-0378">Hydrolase</keyword>
<keyword id="KW-0540">Nuclease</keyword>
<keyword id="KW-0819">tRNA processing</keyword>
<reference key="1">
    <citation type="journal article" date="2009" name="Proc. Natl. Acad. Sci. U.S.A.">
        <title>Biogeography of the Sulfolobus islandicus pan-genome.</title>
        <authorList>
            <person name="Reno M.L."/>
            <person name="Held N.L."/>
            <person name="Fields C.J."/>
            <person name="Burke P.V."/>
            <person name="Whitaker R.J."/>
        </authorList>
    </citation>
    <scope>NUCLEOTIDE SEQUENCE [LARGE SCALE GENOMIC DNA]</scope>
    <source>
        <strain>M.16.27</strain>
    </source>
</reference>
<proteinExistence type="inferred from homology"/>
<gene>
    <name evidence="1" type="primary">rnp2</name>
    <name type="ordered locus">M1627_1452</name>
</gene>
<sequence length="143" mass="16297">MNSIQLIIDIILILWLLILTVLYLRKKSLNLNIVKNKKIVRAKRYIVFYVIAESKVKGDDLERVVRNSLKDLLGNVWLNIANPKVVTYREDTQEGIISTNRIGYKAVLASLPFAKEINGNKILIVPRRTTGSLKKAKKLIGLK</sequence>
<comment type="function">
    <text evidence="1">Part of ribonuclease P, a protein complex that generates mature tRNA molecules by cleaving their 5'-ends.</text>
</comment>
<comment type="catalytic activity">
    <reaction evidence="1">
        <text>Endonucleolytic cleavage of RNA, removing 5'-extranucleotides from tRNA precursor.</text>
        <dbReference type="EC" id="3.1.26.5"/>
    </reaction>
</comment>
<comment type="subunit">
    <text evidence="1">Consists of a catalytic RNA component and at least 4-5 protein subunits.</text>
</comment>
<comment type="subcellular location">
    <subcellularLocation>
        <location evidence="1">Cytoplasm</location>
    </subcellularLocation>
</comment>
<comment type="similarity">
    <text evidence="1">Belongs to the eukaryotic/archaeal RNase P protein component 2 family.</text>
</comment>
<organism>
    <name type="scientific">Saccharolobus islandicus (strain M.16.27)</name>
    <name type="common">Sulfolobus islandicus</name>
    <dbReference type="NCBI Taxonomy" id="427318"/>
    <lineage>
        <taxon>Archaea</taxon>
        <taxon>Thermoproteota</taxon>
        <taxon>Thermoprotei</taxon>
        <taxon>Sulfolobales</taxon>
        <taxon>Sulfolobaceae</taxon>
        <taxon>Saccharolobus</taxon>
    </lineage>
</organism>
<name>RNP2_SACI3</name>
<evidence type="ECO:0000255" key="1">
    <source>
        <dbReference type="HAMAP-Rule" id="MF_00755"/>
    </source>
</evidence>
<feature type="chain" id="PRO_1000212853" description="Ribonuclease P protein component 2">
    <location>
        <begin position="1"/>
        <end position="143"/>
    </location>
</feature>